<accession>B5FPU9</accession>
<reference key="1">
    <citation type="journal article" date="2011" name="J. Bacteriol.">
        <title>Comparative genomics of 28 Salmonella enterica isolates: evidence for CRISPR-mediated adaptive sublineage evolution.</title>
        <authorList>
            <person name="Fricke W.F."/>
            <person name="Mammel M.K."/>
            <person name="McDermott P.F."/>
            <person name="Tartera C."/>
            <person name="White D.G."/>
            <person name="Leclerc J.E."/>
            <person name="Ravel J."/>
            <person name="Cebula T.A."/>
        </authorList>
    </citation>
    <scope>NUCLEOTIDE SEQUENCE [LARGE SCALE GENOMIC DNA]</scope>
    <source>
        <strain>CT_02021853</strain>
    </source>
</reference>
<dbReference type="EMBL" id="CP001144">
    <property type="protein sequence ID" value="ACH76569.1"/>
    <property type="molecule type" value="Genomic_DNA"/>
</dbReference>
<dbReference type="RefSeq" id="WP_000852811.1">
    <property type="nucleotide sequence ID" value="NC_011205.1"/>
</dbReference>
<dbReference type="SMR" id="B5FPU9"/>
<dbReference type="GeneID" id="66758351"/>
<dbReference type="KEGG" id="sed:SeD_A4500"/>
<dbReference type="HOGENOM" id="CLU_142318_0_0_6"/>
<dbReference type="Proteomes" id="UP000008322">
    <property type="component" value="Chromosome"/>
</dbReference>
<dbReference type="GO" id="GO:0005737">
    <property type="term" value="C:cytoplasm"/>
    <property type="evidence" value="ECO:0007669"/>
    <property type="project" value="UniProtKB-SubCell"/>
</dbReference>
<dbReference type="GO" id="GO:0003677">
    <property type="term" value="F:DNA binding"/>
    <property type="evidence" value="ECO:0007669"/>
    <property type="project" value="UniProtKB-KW"/>
</dbReference>
<dbReference type="GO" id="GO:0003700">
    <property type="term" value="F:DNA-binding transcription factor activity"/>
    <property type="evidence" value="ECO:0007669"/>
    <property type="project" value="InterPro"/>
</dbReference>
<dbReference type="GO" id="GO:0009086">
    <property type="term" value="P:methionine biosynthetic process"/>
    <property type="evidence" value="ECO:0007669"/>
    <property type="project" value="UniProtKB-UniRule"/>
</dbReference>
<dbReference type="GO" id="GO:0045892">
    <property type="term" value="P:negative regulation of DNA-templated transcription"/>
    <property type="evidence" value="ECO:0007669"/>
    <property type="project" value="UniProtKB-UniRule"/>
</dbReference>
<dbReference type="CDD" id="cd00490">
    <property type="entry name" value="Met_repressor_MetJ"/>
    <property type="match status" value="1"/>
</dbReference>
<dbReference type="FunFam" id="1.10.140.10:FF:000001">
    <property type="entry name" value="Met repressor"/>
    <property type="match status" value="1"/>
</dbReference>
<dbReference type="Gene3D" id="1.10.140.10">
    <property type="entry name" value="MET Apo-Repressor, subunit A"/>
    <property type="match status" value="1"/>
</dbReference>
<dbReference type="HAMAP" id="MF_00744">
    <property type="entry name" value="MetJ"/>
    <property type="match status" value="1"/>
</dbReference>
<dbReference type="InterPro" id="IPR002084">
    <property type="entry name" value="Met_repressor_MetJ"/>
</dbReference>
<dbReference type="InterPro" id="IPR023453">
    <property type="entry name" value="Met_repressor_MetJ_dom_sf"/>
</dbReference>
<dbReference type="InterPro" id="IPR010985">
    <property type="entry name" value="Ribbon_hlx_hlx"/>
</dbReference>
<dbReference type="NCBIfam" id="NF003622">
    <property type="entry name" value="PRK05264.1"/>
    <property type="match status" value="1"/>
</dbReference>
<dbReference type="Pfam" id="PF01340">
    <property type="entry name" value="MetJ"/>
    <property type="match status" value="1"/>
</dbReference>
<dbReference type="SUPFAM" id="SSF47598">
    <property type="entry name" value="Ribbon-helix-helix"/>
    <property type="match status" value="1"/>
</dbReference>
<gene>
    <name evidence="1" type="primary">metJ</name>
    <name type="ordered locus">SeD_A4500</name>
</gene>
<name>METJ_SALDC</name>
<organism>
    <name type="scientific">Salmonella dublin (strain CT_02021853)</name>
    <dbReference type="NCBI Taxonomy" id="439851"/>
    <lineage>
        <taxon>Bacteria</taxon>
        <taxon>Pseudomonadati</taxon>
        <taxon>Pseudomonadota</taxon>
        <taxon>Gammaproteobacteria</taxon>
        <taxon>Enterobacterales</taxon>
        <taxon>Enterobacteriaceae</taxon>
        <taxon>Salmonella</taxon>
    </lineage>
</organism>
<keyword id="KW-0028">Amino-acid biosynthesis</keyword>
<keyword id="KW-0963">Cytoplasm</keyword>
<keyword id="KW-0238">DNA-binding</keyword>
<keyword id="KW-0486">Methionine biosynthesis</keyword>
<keyword id="KW-0678">Repressor</keyword>
<keyword id="KW-0804">Transcription</keyword>
<keyword id="KW-0805">Transcription regulation</keyword>
<evidence type="ECO:0000255" key="1">
    <source>
        <dbReference type="HAMAP-Rule" id="MF_00744"/>
    </source>
</evidence>
<feature type="chain" id="PRO_1000191218" description="Met repressor">
    <location>
        <begin position="1"/>
        <end position="105"/>
    </location>
</feature>
<sequence length="105" mass="12142">MAEWSGEYISPYAEHGKKSEQVKKITVSIPLKVLKILTDERTRRQVNNLRHATNSELLCEAFLHAFTGQPLPDDADLRKERSDEIPEAAKEIMREMGIDPETWEY</sequence>
<proteinExistence type="inferred from homology"/>
<protein>
    <recommendedName>
        <fullName evidence="1">Met repressor</fullName>
    </recommendedName>
    <alternativeName>
        <fullName evidence="1">Met regulon regulatory protein MetJ</fullName>
    </alternativeName>
</protein>
<comment type="function">
    <text evidence="1">This regulatory protein, when combined with SAM (S-adenosylmethionine) represses the expression of the methionine regulon and of enzymes involved in SAM synthesis.</text>
</comment>
<comment type="subunit">
    <text evidence="1">Homodimer.</text>
</comment>
<comment type="subcellular location">
    <subcellularLocation>
        <location evidence="1">Cytoplasm</location>
    </subcellularLocation>
</comment>
<comment type="domain">
    <text>Does not bind DNA by a helix-turn-helix motif.</text>
</comment>
<comment type="similarity">
    <text evidence="1">Belongs to the MetJ family.</text>
</comment>